<keyword id="KW-0484">Methanogenesis</keyword>
<keyword id="KW-0560">Oxidoreductase</keyword>
<keyword id="KW-1185">Reference proteome</keyword>
<evidence type="ECO:0000250" key="1">
    <source>
        <dbReference type="UniProtKB" id="Q6LY38"/>
    </source>
</evidence>
<evidence type="ECO:0000305" key="2"/>
<reference key="1">
    <citation type="journal article" date="1996" name="Science">
        <title>Complete genome sequence of the methanogenic archaeon, Methanococcus jannaschii.</title>
        <authorList>
            <person name="Bult C.J."/>
            <person name="White O."/>
            <person name="Olsen G.J."/>
            <person name="Zhou L."/>
            <person name="Fleischmann R.D."/>
            <person name="Sutton G.G."/>
            <person name="Blake J.A."/>
            <person name="FitzGerald L.M."/>
            <person name="Clayton R.A."/>
            <person name="Gocayne J.D."/>
            <person name="Kerlavage A.R."/>
            <person name="Dougherty B.A."/>
            <person name="Tomb J.-F."/>
            <person name="Adams M.D."/>
            <person name="Reich C.I."/>
            <person name="Overbeek R."/>
            <person name="Kirkness E.F."/>
            <person name="Weinstock K.G."/>
            <person name="Merrick J.M."/>
            <person name="Glodek A."/>
            <person name="Scott J.L."/>
            <person name="Geoghagen N.S.M."/>
            <person name="Weidman J.F."/>
            <person name="Fuhrmann J.L."/>
            <person name="Nguyen D."/>
            <person name="Utterback T.R."/>
            <person name="Kelley J.M."/>
            <person name="Peterson J.D."/>
            <person name="Sadow P.W."/>
            <person name="Hanna M.C."/>
            <person name="Cotton M.D."/>
            <person name="Roberts K.M."/>
            <person name="Hurst M.A."/>
            <person name="Kaine B.P."/>
            <person name="Borodovsky M."/>
            <person name="Klenk H.-P."/>
            <person name="Fraser C.M."/>
            <person name="Smith H.O."/>
            <person name="Woese C.R."/>
            <person name="Venter J.C."/>
        </authorList>
    </citation>
    <scope>NUCLEOTIDE SEQUENCE [LARGE SCALE GENOMIC DNA]</scope>
    <source>
        <strain>ATCC 43067 / DSM 2661 / JAL-1 / JCM 10045 / NBRC 100440</strain>
    </source>
</reference>
<comment type="function">
    <text evidence="1">Part of a complex that catalyzes the reversible reduction of CoM-S-S-CoB to the thiol-coenzymes H-S-CoM (coenzyme M) and H-S-CoB (coenzyme B).</text>
</comment>
<comment type="pathway">
    <text evidence="1">Cofactor metabolism; coenzyme M-coenzyme B heterodisulfide reduction; coenzyme B and coenzyme M from coenzyme M-coenzyme B heterodisulfide: step 1/1.</text>
</comment>
<comment type="subunit">
    <text evidence="1">The heterodisulfide reductase is composed of three subunits; HdrA, HdrB and HdrC.</text>
</comment>
<comment type="similarity">
    <text evidence="2">Belongs to the HdrB family.</text>
</comment>
<organism>
    <name type="scientific">Methanocaldococcus jannaschii (strain ATCC 43067 / DSM 2661 / JAL-1 / JCM 10045 / NBRC 100440)</name>
    <name type="common">Methanococcus jannaschii</name>
    <dbReference type="NCBI Taxonomy" id="243232"/>
    <lineage>
        <taxon>Archaea</taxon>
        <taxon>Methanobacteriati</taxon>
        <taxon>Methanobacteriota</taxon>
        <taxon>Methanomada group</taxon>
        <taxon>Methanococci</taxon>
        <taxon>Methanococcales</taxon>
        <taxon>Methanocaldococcaceae</taxon>
        <taxon>Methanocaldococcus</taxon>
    </lineage>
</organism>
<accession>Q58273</accession>
<feature type="chain" id="PRO_0000150066" description="CoB--CoM heterodisulfide reductase subunit B 2">
    <location>
        <begin position="1"/>
        <end position="295"/>
    </location>
</feature>
<sequence>MKYAFFLGCIMPHRYPGVEKATKIVMEELGVELEYMPGASCCPAPGVFGSFDQKTWLTLAARNLCIAEEMGLDIVTVCNGCYGSLFEAAHILHENKEALDFVNEKLDKIGKQYKGTIKVRHFAELIYKDIGVDKIKEKVVKPLDVLNVAIHYGCHFLKPSDVKHLDSPERPKLLEEIVAATGAKPVMYRDYLMCCGAGGGVRARFLPTALDMTKEKIRNMLEAGADCTVNVCPFCHLQFDRGQVEIKEKFGEEYKLPVLHLSQLLGLAFGMKPEDLAVSVHAIPVDPVLKKLGIE</sequence>
<gene>
    <name type="primary">hdrB2</name>
    <name type="ordered locus">MJ0863</name>
</gene>
<dbReference type="EC" id="1.8.98.-" evidence="2"/>
<dbReference type="EMBL" id="L77117">
    <property type="protein sequence ID" value="AAB98868.1"/>
    <property type="molecule type" value="Genomic_DNA"/>
</dbReference>
<dbReference type="PIR" id="G64407">
    <property type="entry name" value="G64407"/>
</dbReference>
<dbReference type="RefSeq" id="WP_010870378.1">
    <property type="nucleotide sequence ID" value="NC_000909.1"/>
</dbReference>
<dbReference type="SMR" id="Q58273"/>
<dbReference type="FunCoup" id="Q58273">
    <property type="interactions" value="90"/>
</dbReference>
<dbReference type="STRING" id="243232.MJ_0863"/>
<dbReference type="PaxDb" id="243232-MJ_0863"/>
<dbReference type="EnsemblBacteria" id="AAB98868">
    <property type="protein sequence ID" value="AAB98868"/>
    <property type="gene ID" value="MJ_0863"/>
</dbReference>
<dbReference type="GeneID" id="1451752"/>
<dbReference type="KEGG" id="mja:MJ_0863"/>
<dbReference type="eggNOG" id="arCOG00338">
    <property type="taxonomic scope" value="Archaea"/>
</dbReference>
<dbReference type="HOGENOM" id="CLU_052147_1_0_2"/>
<dbReference type="InParanoid" id="Q58273"/>
<dbReference type="OrthoDB" id="144689at2157"/>
<dbReference type="PhylomeDB" id="Q58273"/>
<dbReference type="UniPathway" id="UPA00647">
    <property type="reaction ID" value="UER00700"/>
</dbReference>
<dbReference type="Proteomes" id="UP000000805">
    <property type="component" value="Chromosome"/>
</dbReference>
<dbReference type="GO" id="GO:0051912">
    <property type="term" value="F:CoB--CoM heterodisulfide reductase activity"/>
    <property type="evidence" value="ECO:0007669"/>
    <property type="project" value="InterPro"/>
</dbReference>
<dbReference type="GO" id="GO:0015948">
    <property type="term" value="P:methanogenesis"/>
    <property type="evidence" value="ECO:0007669"/>
    <property type="project" value="UniProtKB-KW"/>
</dbReference>
<dbReference type="Gene3D" id="1.20.1050.140">
    <property type="match status" value="1"/>
</dbReference>
<dbReference type="InterPro" id="IPR017678">
    <property type="entry name" value="CoB/CoM_hetero-S_Rdtase_bsu"/>
</dbReference>
<dbReference type="InterPro" id="IPR004017">
    <property type="entry name" value="Cys_rich_dom"/>
</dbReference>
<dbReference type="InterPro" id="IPR051278">
    <property type="entry name" value="HdrB/HdrD_reductase"/>
</dbReference>
<dbReference type="NCBIfam" id="TIGR03288">
    <property type="entry name" value="CoB_CoM_SS_B"/>
    <property type="match status" value="1"/>
</dbReference>
<dbReference type="PANTHER" id="PTHR42947">
    <property type="entry name" value="COB--COM HETERODISULFIDE REDUCTASE SUBUNIT B 1"/>
    <property type="match status" value="1"/>
</dbReference>
<dbReference type="PANTHER" id="PTHR42947:SF1">
    <property type="entry name" value="COB--COM HETERODISULFIDE REDUCTASE SUBUNIT B 1"/>
    <property type="match status" value="1"/>
</dbReference>
<dbReference type="Pfam" id="PF02754">
    <property type="entry name" value="CCG"/>
    <property type="match status" value="2"/>
</dbReference>
<protein>
    <recommendedName>
        <fullName evidence="2">CoB--CoM heterodisulfide reductase subunit B 2</fullName>
        <ecNumber evidence="2">1.8.98.-</ecNumber>
    </recommendedName>
</protein>
<proteinExistence type="inferred from homology"/>
<name>HDRB2_METJA</name>